<proteinExistence type="inferred from homology"/>
<accession>A7MY80</accession>
<feature type="signal peptide" evidence="1">
    <location>
        <begin position="1"/>
        <end position="18"/>
    </location>
</feature>
<feature type="chain" id="PRO_0000336620" description="Outer-membrane lipoprotein LolB">
    <location>
        <begin position="19"/>
        <end position="203"/>
    </location>
</feature>
<feature type="lipid moiety-binding region" description="N-palmitoyl cysteine" evidence="1">
    <location>
        <position position="19"/>
    </location>
</feature>
<feature type="lipid moiety-binding region" description="S-diacylglycerol cysteine" evidence="1">
    <location>
        <position position="19"/>
    </location>
</feature>
<name>LOLB_VIBC1</name>
<evidence type="ECO:0000255" key="1">
    <source>
        <dbReference type="HAMAP-Rule" id="MF_00233"/>
    </source>
</evidence>
<evidence type="ECO:0000305" key="2"/>
<sequence>MTLRSFLILLLSSIVLAGCSSVPESVTSVEWQAHEQRLETIDNFQATGKLGYIGPDQRQSLNFFWKHSSALSQLRLTTLLGQTALKLTITPQGATVETYDDQVLSARDANQLIYRLTGLMMPVDHLPDWLLGLPTDADSFQLSPTNTLQALDKQIGLNDWNIAYQRYGDIEWHEQTLPLPNKLRLSTSDVKINLVITKWNITQ</sequence>
<gene>
    <name evidence="1" type="primary">lolB</name>
    <name type="ordered locus">VIBHAR_01248</name>
</gene>
<organism>
    <name type="scientific">Vibrio campbellii (strain ATCC BAA-1116)</name>
    <dbReference type="NCBI Taxonomy" id="2902295"/>
    <lineage>
        <taxon>Bacteria</taxon>
        <taxon>Pseudomonadati</taxon>
        <taxon>Pseudomonadota</taxon>
        <taxon>Gammaproteobacteria</taxon>
        <taxon>Vibrionales</taxon>
        <taxon>Vibrionaceae</taxon>
        <taxon>Vibrio</taxon>
    </lineage>
</organism>
<reference key="1">
    <citation type="submission" date="2007-08" db="EMBL/GenBank/DDBJ databases">
        <authorList>
            <consortium name="The Vibrio harveyi Genome Sequencing Project"/>
            <person name="Bassler B."/>
            <person name="Clifton S.W."/>
            <person name="Fulton L."/>
            <person name="Delehaunty K."/>
            <person name="Fronick C."/>
            <person name="Harrison M."/>
            <person name="Markivic C."/>
            <person name="Fulton R."/>
            <person name="Tin-Wollam A.-M."/>
            <person name="Shah N."/>
            <person name="Pepin K."/>
            <person name="Nash W."/>
            <person name="Thiruvilangam P."/>
            <person name="Bhonagiri V."/>
            <person name="Waters C."/>
            <person name="Tu K.C."/>
            <person name="Irgon J."/>
            <person name="Wilson R.K."/>
        </authorList>
    </citation>
    <scope>NUCLEOTIDE SEQUENCE [LARGE SCALE GENOMIC DNA]</scope>
    <source>
        <strain>ATCC BAA-1116 / BB120</strain>
    </source>
</reference>
<comment type="function">
    <text evidence="1">Plays a critical role in the incorporation of lipoproteins in the outer membrane after they are released by the LolA protein.</text>
</comment>
<comment type="subunit">
    <text evidence="1">Monomer.</text>
</comment>
<comment type="subcellular location">
    <subcellularLocation>
        <location evidence="1">Cell outer membrane</location>
        <topology evidence="1">Lipid-anchor</topology>
    </subcellularLocation>
</comment>
<comment type="similarity">
    <text evidence="1">Belongs to the LolB family.</text>
</comment>
<comment type="sequence caution" evidence="2">
    <conflict type="erroneous initiation">
        <sequence resource="EMBL-CDS" id="ABU70227"/>
    </conflict>
</comment>
<keyword id="KW-0998">Cell outer membrane</keyword>
<keyword id="KW-0143">Chaperone</keyword>
<keyword id="KW-0449">Lipoprotein</keyword>
<keyword id="KW-0472">Membrane</keyword>
<keyword id="KW-0564">Palmitate</keyword>
<keyword id="KW-0653">Protein transport</keyword>
<keyword id="KW-0732">Signal</keyword>
<keyword id="KW-0813">Transport</keyword>
<protein>
    <recommendedName>
        <fullName evidence="1">Outer-membrane lipoprotein LolB</fullName>
    </recommendedName>
</protein>
<dbReference type="EMBL" id="CP000789">
    <property type="protein sequence ID" value="ABU70227.1"/>
    <property type="status" value="ALT_INIT"/>
    <property type="molecule type" value="Genomic_DNA"/>
</dbReference>
<dbReference type="SMR" id="A7MY80"/>
<dbReference type="KEGG" id="vha:VIBHAR_01248"/>
<dbReference type="PATRIC" id="fig|338187.36.peg.1172"/>
<dbReference type="Proteomes" id="UP000008152">
    <property type="component" value="Chromosome I"/>
</dbReference>
<dbReference type="GO" id="GO:0009279">
    <property type="term" value="C:cell outer membrane"/>
    <property type="evidence" value="ECO:0007669"/>
    <property type="project" value="UniProtKB-SubCell"/>
</dbReference>
<dbReference type="GO" id="GO:0044874">
    <property type="term" value="P:lipoprotein localization to outer membrane"/>
    <property type="evidence" value="ECO:0007669"/>
    <property type="project" value="UniProtKB-UniRule"/>
</dbReference>
<dbReference type="GO" id="GO:0015031">
    <property type="term" value="P:protein transport"/>
    <property type="evidence" value="ECO:0007669"/>
    <property type="project" value="UniProtKB-KW"/>
</dbReference>
<dbReference type="CDD" id="cd16326">
    <property type="entry name" value="LolB"/>
    <property type="match status" value="1"/>
</dbReference>
<dbReference type="Gene3D" id="2.50.20.10">
    <property type="entry name" value="Lipoprotein localisation LolA/LolB/LppX"/>
    <property type="match status" value="1"/>
</dbReference>
<dbReference type="HAMAP" id="MF_00233">
    <property type="entry name" value="LolB"/>
    <property type="match status" value="1"/>
</dbReference>
<dbReference type="InterPro" id="IPR029046">
    <property type="entry name" value="LolA/LolB/LppX"/>
</dbReference>
<dbReference type="InterPro" id="IPR004565">
    <property type="entry name" value="OM_lipoprot_LolB"/>
</dbReference>
<dbReference type="NCBIfam" id="TIGR00548">
    <property type="entry name" value="lolB"/>
    <property type="match status" value="1"/>
</dbReference>
<dbReference type="Pfam" id="PF03550">
    <property type="entry name" value="LolB"/>
    <property type="match status" value="1"/>
</dbReference>
<dbReference type="SUPFAM" id="SSF89392">
    <property type="entry name" value="Prokaryotic lipoproteins and lipoprotein localization factors"/>
    <property type="match status" value="1"/>
</dbReference>
<dbReference type="PROSITE" id="PS51257">
    <property type="entry name" value="PROKAR_LIPOPROTEIN"/>
    <property type="match status" value="1"/>
</dbReference>